<name>TFDP_DROME</name>
<accession>Q24318</accession>
<accession>B8A3X4</accession>
<accession>O17472</accession>
<accession>O44080</accession>
<accession>Q86PE0</accession>
<accession>Q8ML56</accession>
<accession>Q9V6M0</accession>
<gene>
    <name type="primary">Dp</name>
    <name type="ORF">CG4654</name>
</gene>
<dbReference type="EMBL" id="AE013599">
    <property type="protein sequence ID" value="AAF58403.1"/>
    <property type="molecule type" value="Genomic_DNA"/>
</dbReference>
<dbReference type="EMBL" id="AE013599">
    <property type="protein sequence ID" value="AAM68602.1"/>
    <property type="molecule type" value="Genomic_DNA"/>
</dbReference>
<dbReference type="EMBL" id="AY069526">
    <property type="protein sequence ID" value="AAL39671.1"/>
    <property type="molecule type" value="mRNA"/>
</dbReference>
<dbReference type="EMBL" id="BT003183">
    <property type="protein sequence ID" value="AAO24938.1"/>
    <property type="molecule type" value="mRNA"/>
</dbReference>
<dbReference type="EMBL" id="BT056266">
    <property type="protein sequence ID" value="ACL68713.1"/>
    <property type="molecule type" value="mRNA"/>
</dbReference>
<dbReference type="EMBL" id="X79708">
    <property type="protein sequence ID" value="CAA56147.2"/>
    <property type="molecule type" value="mRNA"/>
</dbReference>
<dbReference type="EMBL" id="AF011362">
    <property type="protein sequence ID" value="AAB87765.1"/>
    <property type="molecule type" value="Genomic_DNA"/>
</dbReference>
<dbReference type="PIR" id="B55745">
    <property type="entry name" value="B55745"/>
</dbReference>
<dbReference type="RefSeq" id="NP_477039.1">
    <molecule id="Q24318-1"/>
    <property type="nucleotide sequence ID" value="NM_057691.4"/>
</dbReference>
<dbReference type="RefSeq" id="NP_725267.1">
    <molecule id="Q24318-2"/>
    <property type="nucleotide sequence ID" value="NM_165974.3"/>
</dbReference>
<dbReference type="SMR" id="Q24318"/>
<dbReference type="BioGRID" id="62224">
    <property type="interactions" value="32"/>
</dbReference>
<dbReference type="ComplexPortal" id="CPX-2374">
    <property type="entry name" value="drEAM transcriptional repressor complex, Rbf variant"/>
</dbReference>
<dbReference type="ComplexPortal" id="CPX-2376">
    <property type="entry name" value="drEAM transcriptional repressor complex, Rbf2 variant"/>
</dbReference>
<dbReference type="FunCoup" id="Q24318">
    <property type="interactions" value="1575"/>
</dbReference>
<dbReference type="IntAct" id="Q24318">
    <property type="interactions" value="13"/>
</dbReference>
<dbReference type="STRING" id="7227.FBpp0086853"/>
<dbReference type="iPTMnet" id="Q24318"/>
<dbReference type="PaxDb" id="7227-FBpp0086853"/>
<dbReference type="DNASU" id="36461"/>
<dbReference type="EnsemblMetazoa" id="FBtr0087740">
    <molecule id="Q24318-1"/>
    <property type="protein sequence ID" value="FBpp0086853"/>
    <property type="gene ID" value="FBgn0011763"/>
</dbReference>
<dbReference type="EnsemblMetazoa" id="FBtr0087741">
    <molecule id="Q24318-2"/>
    <property type="protein sequence ID" value="FBpp0086854"/>
    <property type="gene ID" value="FBgn0011763"/>
</dbReference>
<dbReference type="GeneID" id="36461"/>
<dbReference type="KEGG" id="dme:Dmel_CG4654"/>
<dbReference type="AGR" id="FB:FBgn0011763"/>
<dbReference type="CTD" id="13450"/>
<dbReference type="FlyBase" id="FBgn0011763">
    <property type="gene designation" value="Dp"/>
</dbReference>
<dbReference type="VEuPathDB" id="VectorBase:FBgn0011763"/>
<dbReference type="eggNOG" id="KOG2829">
    <property type="taxonomic scope" value="Eukaryota"/>
</dbReference>
<dbReference type="GeneTree" id="ENSGT00940000169233"/>
<dbReference type="InParanoid" id="Q24318"/>
<dbReference type="OMA" id="NNPMKIK"/>
<dbReference type="OrthoDB" id="552115at2759"/>
<dbReference type="PhylomeDB" id="Q24318"/>
<dbReference type="Reactome" id="R-DME-1538133">
    <property type="pathway name" value="G0 and Early G1"/>
</dbReference>
<dbReference type="Reactome" id="R-DME-2173796">
    <property type="pathway name" value="SMAD2/SMAD3:SMAD4 heterotrimer regulates transcription"/>
</dbReference>
<dbReference type="Reactome" id="R-DME-69231">
    <property type="pathway name" value="Cyclin D associated events in G1"/>
</dbReference>
<dbReference type="Reactome" id="R-DME-8953750">
    <property type="pathway name" value="Transcriptional Regulation by E2F6"/>
</dbReference>
<dbReference type="BioGRID-ORCS" id="36461">
    <property type="hits" value="1 hit in 3 CRISPR screens"/>
</dbReference>
<dbReference type="ChiTaRS" id="Dp">
    <property type="organism name" value="fly"/>
</dbReference>
<dbReference type="GenomeRNAi" id="36461"/>
<dbReference type="PRO" id="PR:Q24318"/>
<dbReference type="Proteomes" id="UP000000803">
    <property type="component" value="Chromosome 2R"/>
</dbReference>
<dbReference type="Bgee" id="FBgn0011763">
    <property type="expression patterns" value="Expressed in spermatogonium in testis and 283 other cell types or tissues"/>
</dbReference>
<dbReference type="ExpressionAtlas" id="Q24318">
    <property type="expression patterns" value="baseline and differential"/>
</dbReference>
<dbReference type="GO" id="GO:0031523">
    <property type="term" value="C:Myb complex"/>
    <property type="evidence" value="ECO:0000314"/>
    <property type="project" value="FlyBase"/>
</dbReference>
<dbReference type="GO" id="GO:0005634">
    <property type="term" value="C:nucleus"/>
    <property type="evidence" value="ECO:0007005"/>
    <property type="project" value="FlyBase"/>
</dbReference>
<dbReference type="GO" id="GO:0035189">
    <property type="term" value="C:Rb-E2F complex"/>
    <property type="evidence" value="ECO:0000314"/>
    <property type="project" value="FlyBase"/>
</dbReference>
<dbReference type="GO" id="GO:0003677">
    <property type="term" value="F:DNA binding"/>
    <property type="evidence" value="ECO:0000314"/>
    <property type="project" value="FlyBase"/>
</dbReference>
<dbReference type="GO" id="GO:0140297">
    <property type="term" value="F:DNA-binding transcription factor binding"/>
    <property type="evidence" value="ECO:0000353"/>
    <property type="project" value="FlyBase"/>
</dbReference>
<dbReference type="GO" id="GO:0008069">
    <property type="term" value="P:dorsal/ventral axis specification, ovarian follicular epithelium"/>
    <property type="evidence" value="ECO:0000315"/>
    <property type="project" value="FlyBase"/>
</dbReference>
<dbReference type="GO" id="GO:0007307">
    <property type="term" value="P:eggshell chorion gene amplification"/>
    <property type="evidence" value="ECO:0000304"/>
    <property type="project" value="FlyBase"/>
</dbReference>
<dbReference type="GO" id="GO:0007113">
    <property type="term" value="P:endomitotic cell cycle"/>
    <property type="evidence" value="ECO:0000304"/>
    <property type="project" value="FlyBase"/>
</dbReference>
<dbReference type="GO" id="GO:0008630">
    <property type="term" value="P:intrinsic apoptotic signaling pathway in response to DNA damage"/>
    <property type="evidence" value="ECO:0000315"/>
    <property type="project" value="FlyBase"/>
</dbReference>
<dbReference type="GO" id="GO:0045476">
    <property type="term" value="P:nurse cell apoptotic process"/>
    <property type="evidence" value="ECO:0000304"/>
    <property type="project" value="FlyBase"/>
</dbReference>
<dbReference type="GO" id="GO:0048477">
    <property type="term" value="P:oogenesis"/>
    <property type="evidence" value="ECO:0000315"/>
    <property type="project" value="FlyBase"/>
</dbReference>
<dbReference type="GO" id="GO:0010628">
    <property type="term" value="P:positive regulation of gene expression"/>
    <property type="evidence" value="ECO:0000315"/>
    <property type="project" value="FlyBase"/>
</dbReference>
<dbReference type="GO" id="GO:0045850">
    <property type="term" value="P:positive regulation of nurse cell apoptotic process"/>
    <property type="evidence" value="ECO:0000315"/>
    <property type="project" value="FlyBase"/>
</dbReference>
<dbReference type="GO" id="GO:0051726">
    <property type="term" value="P:regulation of cell cycle"/>
    <property type="evidence" value="ECO:0000315"/>
    <property type="project" value="FlyBase"/>
</dbReference>
<dbReference type="GO" id="GO:0006357">
    <property type="term" value="P:regulation of transcription by RNA polymerase II"/>
    <property type="evidence" value="ECO:0000318"/>
    <property type="project" value="GO_Central"/>
</dbReference>
<dbReference type="CDD" id="cd14458">
    <property type="entry name" value="DP_DD"/>
    <property type="match status" value="1"/>
</dbReference>
<dbReference type="FunFam" id="1.10.10.10:FF:000047">
    <property type="entry name" value="Transcription factor"/>
    <property type="match status" value="1"/>
</dbReference>
<dbReference type="FunFam" id="1.20.140.80:FF:000005">
    <property type="entry name" value="Transcription factor"/>
    <property type="match status" value="1"/>
</dbReference>
<dbReference type="Gene3D" id="1.20.140.80">
    <property type="entry name" value="Transcription factor DP"/>
    <property type="match status" value="1"/>
</dbReference>
<dbReference type="Gene3D" id="1.10.10.10">
    <property type="entry name" value="Winged helix-like DNA-binding domain superfamily/Winged helix DNA-binding domain"/>
    <property type="match status" value="1"/>
</dbReference>
<dbReference type="InterPro" id="IPR037241">
    <property type="entry name" value="E2F-DP_heterodim"/>
</dbReference>
<dbReference type="InterPro" id="IPR003316">
    <property type="entry name" value="E2F_WHTH_DNA-bd_dom"/>
</dbReference>
<dbReference type="InterPro" id="IPR038168">
    <property type="entry name" value="TF_DP_C_sf"/>
</dbReference>
<dbReference type="InterPro" id="IPR014889">
    <property type="entry name" value="Transc_factor_DP_C"/>
</dbReference>
<dbReference type="InterPro" id="IPR015648">
    <property type="entry name" value="Transcrpt_fac_DP"/>
</dbReference>
<dbReference type="InterPro" id="IPR036388">
    <property type="entry name" value="WH-like_DNA-bd_sf"/>
</dbReference>
<dbReference type="InterPro" id="IPR036390">
    <property type="entry name" value="WH_DNA-bd_sf"/>
</dbReference>
<dbReference type="PANTHER" id="PTHR12548">
    <property type="entry name" value="TRANSCRIPTION FACTOR DP"/>
    <property type="match status" value="1"/>
</dbReference>
<dbReference type="PANTHER" id="PTHR12548:SF9">
    <property type="entry name" value="TRANSCRIPTION FACTOR DP"/>
    <property type="match status" value="1"/>
</dbReference>
<dbReference type="Pfam" id="PF08781">
    <property type="entry name" value="DP"/>
    <property type="match status" value="1"/>
</dbReference>
<dbReference type="Pfam" id="PF02319">
    <property type="entry name" value="E2F_TDP"/>
    <property type="match status" value="1"/>
</dbReference>
<dbReference type="PIRSF" id="PIRSF009404">
    <property type="entry name" value="Transcription_factor_DP"/>
    <property type="match status" value="1"/>
</dbReference>
<dbReference type="SMART" id="SM01138">
    <property type="entry name" value="DP"/>
    <property type="match status" value="1"/>
</dbReference>
<dbReference type="SMART" id="SM01372">
    <property type="entry name" value="E2F_TDP"/>
    <property type="match status" value="1"/>
</dbReference>
<dbReference type="SUPFAM" id="SSF144074">
    <property type="entry name" value="E2F-DP heterodimerization region"/>
    <property type="match status" value="1"/>
</dbReference>
<dbReference type="SUPFAM" id="SSF46785">
    <property type="entry name" value="Winged helix' DNA-binding domain"/>
    <property type="match status" value="1"/>
</dbReference>
<sequence>MAHSTGGTVKTDEVNFFFRNEHGQISKMLKPAQNKSEMEGGKPVAVVYATGSSARNSGSASGIGNVGRMGAFSQMGSQGQFIRLQDNGLSIPKTEAGTTYTTVSAQKTSGAGSGHYDLPLKGDRYVKFTPNPIKMKSKLHAIQSNSLHSMSASSSSVQRKRKPDKAGKGLRHFSMKVCEKVEEKGKTTYNEVADDLVSEEMKNNAYDNNCDQKNIRRRVYDALNVLMAINVISKDKKEIRWIGLPANSTETFLALEEENCQRRERIKQKNEMLREMIMQHVAFKGLVERNKRNESQGVVPSPNASIQLPFIIVNTHKSTKINCSVTNDKSEYIFKFDKTFEMHDDIEVLKRMGFLLGLDKGECTPENIERVKSWVPPNLAKYVEAYGTGKTGENMYESDDEDNEFNGYLESANESQGFAQHSAQHTTDGEFKLEMDDDELDDDID</sequence>
<comment type="function">
    <text evidence="2">Component of the DREAM complex, a multiprotein complex that can both act as a transcription activator or repressor depending on the context. In follicle cells, the complex plays a central role in the site-specific DNA replication at the chorion loci. During development, the complex represses transcription of developmentally controlled E2F target genes. Can stimulate E2F-dependent transcription.</text>
</comment>
<comment type="subunit">
    <text evidence="2 3">Heterodimer of E2f and Dp. Cooperate to give sequence-specific DNA binding and optimal trans-activation. Component of the DREAM complex at least composed of Myb, Caf1-55, mip40, mip120, mip130, E2f2, Dp, Rbf, Rbf2, lin-52, HDAC1/Rpd3 and l(3)mbt.</text>
</comment>
<comment type="interaction">
    <interactant intactId="EBI-530830">
        <id>Q24318</id>
    </interactant>
    <interactant intactId="EBI-145741">
        <id>Q24472</id>
        <label>Rbf</label>
    </interactant>
    <organismsDiffer>false</organismsDiffer>
    <experiments>3</experiments>
</comment>
<comment type="subcellular location">
    <subcellularLocation>
        <location evidence="6">Nucleus</location>
    </subcellularLocation>
</comment>
<comment type="alternative products">
    <event type="alternative splicing"/>
    <isoform>
        <id>Q24318-1</id>
        <name>A</name>
        <sequence type="displayed"/>
    </isoform>
    <isoform>
        <id>Q24318-2</id>
        <name>B</name>
        <sequence type="described" ref="VSP_014146"/>
    </isoform>
</comment>
<comment type="similarity">
    <text evidence="6">Belongs to the E2F/DP family.</text>
</comment>
<protein>
    <recommendedName>
        <fullName>Transcription factor Dp</fullName>
    </recommendedName>
</protein>
<evidence type="ECO:0000256" key="1">
    <source>
        <dbReference type="SAM" id="MobiDB-lite"/>
    </source>
</evidence>
<evidence type="ECO:0000269" key="2">
    <source>
    </source>
</evidence>
<evidence type="ECO:0000269" key="3">
    <source>
    </source>
</evidence>
<evidence type="ECO:0000269" key="4">
    <source>
    </source>
</evidence>
<evidence type="ECO:0000303" key="5">
    <source ref="4"/>
</evidence>
<evidence type="ECO:0000305" key="6"/>
<feature type="chain" id="PRO_0000219479" description="Transcription factor Dp">
    <location>
        <begin position="1"/>
        <end position="445"/>
    </location>
</feature>
<feature type="region of interest" description="Disordered" evidence="1">
    <location>
        <begin position="145"/>
        <end position="168"/>
    </location>
</feature>
<feature type="region of interest" description="Disordered" evidence="1">
    <location>
        <begin position="392"/>
        <end position="445"/>
    </location>
</feature>
<feature type="compositionally biased region" description="Low complexity" evidence="1">
    <location>
        <begin position="145"/>
        <end position="156"/>
    </location>
</feature>
<feature type="compositionally biased region" description="Basic residues" evidence="1">
    <location>
        <begin position="158"/>
        <end position="168"/>
    </location>
</feature>
<feature type="compositionally biased region" description="Polar residues" evidence="1">
    <location>
        <begin position="412"/>
        <end position="426"/>
    </location>
</feature>
<feature type="compositionally biased region" description="Acidic residues" evidence="1">
    <location>
        <begin position="435"/>
        <end position="445"/>
    </location>
</feature>
<feature type="modified residue" description="Phosphoserine" evidence="4">
    <location>
        <position position="398"/>
    </location>
</feature>
<feature type="splice variant" id="VSP_014146" description="In isoform B." evidence="5">
    <original>MAHSTGGTVKTDEVNFFFRNEH</original>
    <variation>MCISETKEPPHLPISNSA</variation>
    <location>
        <begin position="1"/>
        <end position="22"/>
    </location>
</feature>
<feature type="sequence conflict" description="In Ref. 4; AAO24938." evidence="6" ref="4">
    <original>D</original>
    <variation>G</variation>
    <location>
        <position position="117"/>
    </location>
</feature>
<feature type="sequence conflict" description="In Ref. 6; AAB87765." evidence="6" ref="6">
    <original>H</original>
    <variation>L</variation>
    <location>
        <position position="343"/>
    </location>
</feature>
<keyword id="KW-0010">Activator</keyword>
<keyword id="KW-0025">Alternative splicing</keyword>
<keyword id="KW-0238">DNA-binding</keyword>
<keyword id="KW-0539">Nucleus</keyword>
<keyword id="KW-0597">Phosphoprotein</keyword>
<keyword id="KW-1185">Reference proteome</keyword>
<keyword id="KW-0678">Repressor</keyword>
<keyword id="KW-0804">Transcription</keyword>
<keyword id="KW-0805">Transcription regulation</keyword>
<proteinExistence type="evidence at protein level"/>
<organism>
    <name type="scientific">Drosophila melanogaster</name>
    <name type="common">Fruit fly</name>
    <dbReference type="NCBI Taxonomy" id="7227"/>
    <lineage>
        <taxon>Eukaryota</taxon>
        <taxon>Metazoa</taxon>
        <taxon>Ecdysozoa</taxon>
        <taxon>Arthropoda</taxon>
        <taxon>Hexapoda</taxon>
        <taxon>Insecta</taxon>
        <taxon>Pterygota</taxon>
        <taxon>Neoptera</taxon>
        <taxon>Endopterygota</taxon>
        <taxon>Diptera</taxon>
        <taxon>Brachycera</taxon>
        <taxon>Muscomorpha</taxon>
        <taxon>Ephydroidea</taxon>
        <taxon>Drosophilidae</taxon>
        <taxon>Drosophila</taxon>
        <taxon>Sophophora</taxon>
    </lineage>
</organism>
<reference key="1">
    <citation type="journal article" date="2000" name="Science">
        <title>The genome sequence of Drosophila melanogaster.</title>
        <authorList>
            <person name="Adams M.D."/>
            <person name="Celniker S.E."/>
            <person name="Holt R.A."/>
            <person name="Evans C.A."/>
            <person name="Gocayne J.D."/>
            <person name="Amanatides P.G."/>
            <person name="Scherer S.E."/>
            <person name="Li P.W."/>
            <person name="Hoskins R.A."/>
            <person name="Galle R.F."/>
            <person name="George R.A."/>
            <person name="Lewis S.E."/>
            <person name="Richards S."/>
            <person name="Ashburner M."/>
            <person name="Henderson S.N."/>
            <person name="Sutton G.G."/>
            <person name="Wortman J.R."/>
            <person name="Yandell M.D."/>
            <person name="Zhang Q."/>
            <person name="Chen L.X."/>
            <person name="Brandon R.C."/>
            <person name="Rogers Y.-H.C."/>
            <person name="Blazej R.G."/>
            <person name="Champe M."/>
            <person name="Pfeiffer B.D."/>
            <person name="Wan K.H."/>
            <person name="Doyle C."/>
            <person name="Baxter E.G."/>
            <person name="Helt G."/>
            <person name="Nelson C.R."/>
            <person name="Miklos G.L.G."/>
            <person name="Abril J.F."/>
            <person name="Agbayani A."/>
            <person name="An H.-J."/>
            <person name="Andrews-Pfannkoch C."/>
            <person name="Baldwin D."/>
            <person name="Ballew R.M."/>
            <person name="Basu A."/>
            <person name="Baxendale J."/>
            <person name="Bayraktaroglu L."/>
            <person name="Beasley E.M."/>
            <person name="Beeson K.Y."/>
            <person name="Benos P.V."/>
            <person name="Berman B.P."/>
            <person name="Bhandari D."/>
            <person name="Bolshakov S."/>
            <person name="Borkova D."/>
            <person name="Botchan M.R."/>
            <person name="Bouck J."/>
            <person name="Brokstein P."/>
            <person name="Brottier P."/>
            <person name="Burtis K.C."/>
            <person name="Busam D.A."/>
            <person name="Butler H."/>
            <person name="Cadieu E."/>
            <person name="Center A."/>
            <person name="Chandra I."/>
            <person name="Cherry J.M."/>
            <person name="Cawley S."/>
            <person name="Dahlke C."/>
            <person name="Davenport L.B."/>
            <person name="Davies P."/>
            <person name="de Pablos B."/>
            <person name="Delcher A."/>
            <person name="Deng Z."/>
            <person name="Mays A.D."/>
            <person name="Dew I."/>
            <person name="Dietz S.M."/>
            <person name="Dodson K."/>
            <person name="Doup L.E."/>
            <person name="Downes M."/>
            <person name="Dugan-Rocha S."/>
            <person name="Dunkov B.C."/>
            <person name="Dunn P."/>
            <person name="Durbin K.J."/>
            <person name="Evangelista C.C."/>
            <person name="Ferraz C."/>
            <person name="Ferriera S."/>
            <person name="Fleischmann W."/>
            <person name="Fosler C."/>
            <person name="Gabrielian A.E."/>
            <person name="Garg N.S."/>
            <person name="Gelbart W.M."/>
            <person name="Glasser K."/>
            <person name="Glodek A."/>
            <person name="Gong F."/>
            <person name="Gorrell J.H."/>
            <person name="Gu Z."/>
            <person name="Guan P."/>
            <person name="Harris M."/>
            <person name="Harris N.L."/>
            <person name="Harvey D.A."/>
            <person name="Heiman T.J."/>
            <person name="Hernandez J.R."/>
            <person name="Houck J."/>
            <person name="Hostin D."/>
            <person name="Houston K.A."/>
            <person name="Howland T.J."/>
            <person name="Wei M.-H."/>
            <person name="Ibegwam C."/>
            <person name="Jalali M."/>
            <person name="Kalush F."/>
            <person name="Karpen G.H."/>
            <person name="Ke Z."/>
            <person name="Kennison J.A."/>
            <person name="Ketchum K.A."/>
            <person name="Kimmel B.E."/>
            <person name="Kodira C.D."/>
            <person name="Kraft C.L."/>
            <person name="Kravitz S."/>
            <person name="Kulp D."/>
            <person name="Lai Z."/>
            <person name="Lasko P."/>
            <person name="Lei Y."/>
            <person name="Levitsky A.A."/>
            <person name="Li J.H."/>
            <person name="Li Z."/>
            <person name="Liang Y."/>
            <person name="Lin X."/>
            <person name="Liu X."/>
            <person name="Mattei B."/>
            <person name="McIntosh T.C."/>
            <person name="McLeod M.P."/>
            <person name="McPherson D."/>
            <person name="Merkulov G."/>
            <person name="Milshina N.V."/>
            <person name="Mobarry C."/>
            <person name="Morris J."/>
            <person name="Moshrefi A."/>
            <person name="Mount S.M."/>
            <person name="Moy M."/>
            <person name="Murphy B."/>
            <person name="Murphy L."/>
            <person name="Muzny D.M."/>
            <person name="Nelson D.L."/>
            <person name="Nelson D.R."/>
            <person name="Nelson K.A."/>
            <person name="Nixon K."/>
            <person name="Nusskern D.R."/>
            <person name="Pacleb J.M."/>
            <person name="Palazzolo M."/>
            <person name="Pittman G.S."/>
            <person name="Pan S."/>
            <person name="Pollard J."/>
            <person name="Puri V."/>
            <person name="Reese M.G."/>
            <person name="Reinert K."/>
            <person name="Remington K."/>
            <person name="Saunders R.D.C."/>
            <person name="Scheeler F."/>
            <person name="Shen H."/>
            <person name="Shue B.C."/>
            <person name="Siden-Kiamos I."/>
            <person name="Simpson M."/>
            <person name="Skupski M.P."/>
            <person name="Smith T.J."/>
            <person name="Spier E."/>
            <person name="Spradling A.C."/>
            <person name="Stapleton M."/>
            <person name="Strong R."/>
            <person name="Sun E."/>
            <person name="Svirskas R."/>
            <person name="Tector C."/>
            <person name="Turner R."/>
            <person name="Venter E."/>
            <person name="Wang A.H."/>
            <person name="Wang X."/>
            <person name="Wang Z.-Y."/>
            <person name="Wassarman D.A."/>
            <person name="Weinstock G.M."/>
            <person name="Weissenbach J."/>
            <person name="Williams S.M."/>
            <person name="Woodage T."/>
            <person name="Worley K.C."/>
            <person name="Wu D."/>
            <person name="Yang S."/>
            <person name="Yao Q.A."/>
            <person name="Ye J."/>
            <person name="Yeh R.-F."/>
            <person name="Zaveri J.S."/>
            <person name="Zhan M."/>
            <person name="Zhang G."/>
            <person name="Zhao Q."/>
            <person name="Zheng L."/>
            <person name="Zheng X.H."/>
            <person name="Zhong F.N."/>
            <person name="Zhong W."/>
            <person name="Zhou X."/>
            <person name="Zhu S.C."/>
            <person name="Zhu X."/>
            <person name="Smith H.O."/>
            <person name="Gibbs R.A."/>
            <person name="Myers E.W."/>
            <person name="Rubin G.M."/>
            <person name="Venter J.C."/>
        </authorList>
    </citation>
    <scope>NUCLEOTIDE SEQUENCE [LARGE SCALE GENOMIC DNA]</scope>
    <source>
        <strain>Berkeley</strain>
    </source>
</reference>
<reference key="2">
    <citation type="journal article" date="2002" name="Genome Biol.">
        <title>Annotation of the Drosophila melanogaster euchromatic genome: a systematic review.</title>
        <authorList>
            <person name="Misra S."/>
            <person name="Crosby M.A."/>
            <person name="Mungall C.J."/>
            <person name="Matthews B.B."/>
            <person name="Campbell K.S."/>
            <person name="Hradecky P."/>
            <person name="Huang Y."/>
            <person name="Kaminker J.S."/>
            <person name="Millburn G.H."/>
            <person name="Prochnik S.E."/>
            <person name="Smith C.D."/>
            <person name="Tupy J.L."/>
            <person name="Whitfield E.J."/>
            <person name="Bayraktaroglu L."/>
            <person name="Berman B.P."/>
            <person name="Bettencourt B.R."/>
            <person name="Celniker S.E."/>
            <person name="de Grey A.D.N.J."/>
            <person name="Drysdale R.A."/>
            <person name="Harris N.L."/>
            <person name="Richter J."/>
            <person name="Russo S."/>
            <person name="Schroeder A.J."/>
            <person name="Shu S.Q."/>
            <person name="Stapleton M."/>
            <person name="Yamada C."/>
            <person name="Ashburner M."/>
            <person name="Gelbart W.M."/>
            <person name="Rubin G.M."/>
            <person name="Lewis S.E."/>
        </authorList>
    </citation>
    <scope>GENOME REANNOTATION</scope>
    <scope>ALTERNATIVE SPLICING</scope>
    <source>
        <strain>Berkeley</strain>
    </source>
</reference>
<reference key="3">
    <citation type="journal article" date="2002" name="Genome Biol.">
        <title>A Drosophila full-length cDNA resource.</title>
        <authorList>
            <person name="Stapleton M."/>
            <person name="Carlson J.W."/>
            <person name="Brokstein P."/>
            <person name="Yu C."/>
            <person name="Champe M."/>
            <person name="George R.A."/>
            <person name="Guarin H."/>
            <person name="Kronmiller B."/>
            <person name="Pacleb J.M."/>
            <person name="Park S."/>
            <person name="Wan K.H."/>
            <person name="Rubin G.M."/>
            <person name="Celniker S.E."/>
        </authorList>
    </citation>
    <scope>NUCLEOTIDE SEQUENCE [LARGE SCALE MRNA] (ISOFORM A)</scope>
    <source>
        <strain>Berkeley</strain>
        <tissue>Embryo</tissue>
    </source>
</reference>
<reference key="4">
    <citation type="submission" date="2009-01" db="EMBL/GenBank/DDBJ databases">
        <authorList>
            <person name="Stapleton M."/>
            <person name="Brokstein P."/>
            <person name="Hong L."/>
            <person name="Agbayani A."/>
            <person name="Carlson J.W."/>
            <person name="Booth B."/>
            <person name="Champe M."/>
            <person name="Chavez C."/>
            <person name="Dorsett V."/>
            <person name="Dresnek D."/>
            <person name="Farfan D."/>
            <person name="Frise E."/>
            <person name="George R.A."/>
            <person name="Gonzalez M."/>
            <person name="Guarin H."/>
            <person name="Kronmiller B."/>
            <person name="Li P.W."/>
            <person name="Liao G."/>
            <person name="Miranda A."/>
            <person name="Mungall C.J."/>
            <person name="Nunoo J."/>
            <person name="Pacleb J.M."/>
            <person name="Paragas V."/>
            <person name="Park S."/>
            <person name="Patel S."/>
            <person name="Phouanenavong S."/>
            <person name="Wan K.H."/>
            <person name="Yu C."/>
            <person name="Lewis S.E."/>
            <person name="Rubin G.M."/>
            <person name="Celniker S.E."/>
        </authorList>
    </citation>
    <scope>NUCLEOTIDE SEQUENCE [LARGE SCALE MRNA] (ISOFORM B)</scope>
    <source>
        <strain>Berkeley</strain>
        <tissue>Embryo</tissue>
    </source>
</reference>
<reference key="5">
    <citation type="journal article" date="1994" name="Proc. Natl. Acad. Sci. U.S.A.">
        <title>DNA-binding and trans-activation properties of Drosophila E2F and DP proteins.</title>
        <authorList>
            <person name="Dynlacht B.D."/>
            <person name="Brook A."/>
            <person name="Dembski M."/>
            <person name="Yenush L."/>
            <person name="Dyson N."/>
        </authorList>
    </citation>
    <scope>NUCLEOTIDE SEQUENCE [MRNA] OF 50-445</scope>
    <source>
        <tissue>Eye imaginal disk</tissue>
    </source>
</reference>
<reference key="6">
    <citation type="journal article" date="1997" name="Genes Dev.">
        <title>Mutations in Drosophila DP and E2F distinguish G1-S progression from an associated transcriptional program.</title>
        <authorList>
            <person name="Royzman I."/>
            <person name="Whittaker A.J."/>
            <person name="Orr-Weaver T.L."/>
        </authorList>
    </citation>
    <scope>NUCLEOTIDE SEQUENCE [GENOMIC DNA] OF 83-445</scope>
</reference>
<reference key="7">
    <citation type="journal article" date="2004" name="Cell">
        <title>Native E2F/RBF complexes contain Myb-interacting proteins and repress transcription of developmentally controlled E2F target genes.</title>
        <authorList>
            <person name="Korenjak M."/>
            <person name="Taylor-Harding B."/>
            <person name="Binne U.K."/>
            <person name="Satterlee J.S."/>
            <person name="Stevaux O."/>
            <person name="Aasland R."/>
            <person name="White-Cooper H."/>
            <person name="Dyson N."/>
            <person name="Brehm A."/>
        </authorList>
    </citation>
    <scope>FUNCTION</scope>
    <scope>IDENTIFICATION IN THE DREAM COMPLEX</scope>
</reference>
<reference key="8">
    <citation type="journal article" date="2004" name="Genes Dev.">
        <title>Identification of a Drosophila Myb-E2F2/RBF transcriptional repressor complex.</title>
        <authorList>
            <person name="Lewis P.W."/>
            <person name="Beall E.L."/>
            <person name="Fleischer T.C."/>
            <person name="Georlette D."/>
            <person name="Link A.J."/>
            <person name="Botchan M.R."/>
        </authorList>
    </citation>
    <scope>IDENTIFICATION IN THE DREAM COMPLEX</scope>
</reference>
<reference key="9">
    <citation type="journal article" date="2008" name="J. Proteome Res.">
        <title>Phosphoproteome analysis of Drosophila melanogaster embryos.</title>
        <authorList>
            <person name="Zhai B."/>
            <person name="Villen J."/>
            <person name="Beausoleil S.A."/>
            <person name="Mintseris J."/>
            <person name="Gygi S.P."/>
        </authorList>
    </citation>
    <scope>PHOSPHORYLATION [LARGE SCALE ANALYSIS] AT SER-398</scope>
    <scope>IDENTIFICATION BY MASS SPECTROMETRY</scope>
    <source>
        <tissue>Embryo</tissue>
    </source>
</reference>